<feature type="chain" id="PRO_0000191962" description="UDP-3-O-acyl-N-acetylglucosamine deacetylase">
    <location>
        <begin position="1"/>
        <end position="305"/>
    </location>
</feature>
<feature type="active site" description="Proton donor" evidence="1">
    <location>
        <position position="265"/>
    </location>
</feature>
<feature type="binding site" evidence="1">
    <location>
        <position position="79"/>
    </location>
    <ligand>
        <name>Zn(2+)</name>
        <dbReference type="ChEBI" id="CHEBI:29105"/>
    </ligand>
</feature>
<feature type="binding site" evidence="1">
    <location>
        <position position="238"/>
    </location>
    <ligand>
        <name>Zn(2+)</name>
        <dbReference type="ChEBI" id="CHEBI:29105"/>
    </ligand>
</feature>
<feature type="binding site" evidence="1">
    <location>
        <position position="242"/>
    </location>
    <ligand>
        <name>Zn(2+)</name>
        <dbReference type="ChEBI" id="CHEBI:29105"/>
    </ligand>
</feature>
<keyword id="KW-0378">Hydrolase</keyword>
<keyword id="KW-0441">Lipid A biosynthesis</keyword>
<keyword id="KW-0444">Lipid biosynthesis</keyword>
<keyword id="KW-0443">Lipid metabolism</keyword>
<keyword id="KW-0479">Metal-binding</keyword>
<keyword id="KW-1185">Reference proteome</keyword>
<keyword id="KW-0862">Zinc</keyword>
<comment type="function">
    <text evidence="1">Catalyzes the hydrolysis of UDP-3-O-myristoyl-N-acetylglucosamine to form UDP-3-O-myristoylglucosamine and acetate, the committed step in lipid A biosynthesis.</text>
</comment>
<comment type="catalytic activity">
    <reaction evidence="1">
        <text>a UDP-3-O-[(3R)-3-hydroxyacyl]-N-acetyl-alpha-D-glucosamine + H2O = a UDP-3-O-[(3R)-3-hydroxyacyl]-alpha-D-glucosamine + acetate</text>
        <dbReference type="Rhea" id="RHEA:67816"/>
        <dbReference type="ChEBI" id="CHEBI:15377"/>
        <dbReference type="ChEBI" id="CHEBI:30089"/>
        <dbReference type="ChEBI" id="CHEBI:137740"/>
        <dbReference type="ChEBI" id="CHEBI:173225"/>
        <dbReference type="EC" id="3.5.1.108"/>
    </reaction>
</comment>
<comment type="cofactor">
    <cofactor evidence="1">
        <name>Zn(2+)</name>
        <dbReference type="ChEBI" id="CHEBI:29105"/>
    </cofactor>
</comment>
<comment type="pathway">
    <text evidence="1">Glycolipid biosynthesis; lipid IV(A) biosynthesis; lipid IV(A) from (3R)-3-hydroxytetradecanoyl-[acyl-carrier-protein] and UDP-N-acetyl-alpha-D-glucosamine: step 2/6.</text>
</comment>
<comment type="similarity">
    <text evidence="1">Belongs to the LpxC family.</text>
</comment>
<gene>
    <name evidence="1" type="primary">lpxC</name>
    <name type="ordered locus">VF_2195</name>
</gene>
<dbReference type="EC" id="3.5.1.108" evidence="1"/>
<dbReference type="EMBL" id="CP000020">
    <property type="protein sequence ID" value="AAW86690.1"/>
    <property type="molecule type" value="Genomic_DNA"/>
</dbReference>
<dbReference type="RefSeq" id="WP_011262630.1">
    <property type="nucleotide sequence ID" value="NZ_CAWLES010000001.1"/>
</dbReference>
<dbReference type="RefSeq" id="YP_205578.1">
    <property type="nucleotide sequence ID" value="NC_006840.2"/>
</dbReference>
<dbReference type="SMR" id="Q5E2Q6"/>
<dbReference type="STRING" id="312309.VF_2195"/>
<dbReference type="EnsemblBacteria" id="AAW86690">
    <property type="protein sequence ID" value="AAW86690"/>
    <property type="gene ID" value="VF_2195"/>
</dbReference>
<dbReference type="GeneID" id="54164912"/>
<dbReference type="KEGG" id="vfi:VF_2195"/>
<dbReference type="PATRIC" id="fig|312309.11.peg.2235"/>
<dbReference type="eggNOG" id="COG0774">
    <property type="taxonomic scope" value="Bacteria"/>
</dbReference>
<dbReference type="HOGENOM" id="CLU_046528_1_0_6"/>
<dbReference type="OrthoDB" id="9802746at2"/>
<dbReference type="UniPathway" id="UPA00359">
    <property type="reaction ID" value="UER00478"/>
</dbReference>
<dbReference type="Proteomes" id="UP000000537">
    <property type="component" value="Chromosome I"/>
</dbReference>
<dbReference type="GO" id="GO:0016020">
    <property type="term" value="C:membrane"/>
    <property type="evidence" value="ECO:0007669"/>
    <property type="project" value="GOC"/>
</dbReference>
<dbReference type="GO" id="GO:0046872">
    <property type="term" value="F:metal ion binding"/>
    <property type="evidence" value="ECO:0007669"/>
    <property type="project" value="UniProtKB-KW"/>
</dbReference>
<dbReference type="GO" id="GO:0103117">
    <property type="term" value="F:UDP-3-O-acyl-N-acetylglucosamine deacetylase activity"/>
    <property type="evidence" value="ECO:0007669"/>
    <property type="project" value="UniProtKB-UniRule"/>
</dbReference>
<dbReference type="GO" id="GO:0009245">
    <property type="term" value="P:lipid A biosynthetic process"/>
    <property type="evidence" value="ECO:0007669"/>
    <property type="project" value="UniProtKB-UniRule"/>
</dbReference>
<dbReference type="FunFam" id="3.30.1700.10:FF:000001">
    <property type="entry name" value="UDP-3-O-acyl-N-acetylglucosamine deacetylase"/>
    <property type="match status" value="1"/>
</dbReference>
<dbReference type="FunFam" id="3.30.230.20:FF:000001">
    <property type="entry name" value="UDP-3-O-acyl-N-acetylglucosamine deacetylase"/>
    <property type="match status" value="1"/>
</dbReference>
<dbReference type="Gene3D" id="3.30.230.20">
    <property type="entry name" value="lpxc deacetylase, domain 1"/>
    <property type="match status" value="1"/>
</dbReference>
<dbReference type="Gene3D" id="3.30.1700.10">
    <property type="entry name" value="lpxc deacetylase, domain 2"/>
    <property type="match status" value="1"/>
</dbReference>
<dbReference type="HAMAP" id="MF_00388">
    <property type="entry name" value="LpxC"/>
    <property type="match status" value="1"/>
</dbReference>
<dbReference type="InterPro" id="IPR020568">
    <property type="entry name" value="Ribosomal_Su5_D2-typ_SF"/>
</dbReference>
<dbReference type="InterPro" id="IPR004463">
    <property type="entry name" value="UDP-acyl_GlcNac_deAcase"/>
</dbReference>
<dbReference type="InterPro" id="IPR011334">
    <property type="entry name" value="UDP-acyl_GlcNac_deAcase_C"/>
</dbReference>
<dbReference type="InterPro" id="IPR015870">
    <property type="entry name" value="UDP-acyl_N-AcGlcN_deAcase_N"/>
</dbReference>
<dbReference type="NCBIfam" id="TIGR00325">
    <property type="entry name" value="lpxC"/>
    <property type="match status" value="1"/>
</dbReference>
<dbReference type="PANTHER" id="PTHR33694">
    <property type="entry name" value="UDP-3-O-ACYL-N-ACETYLGLUCOSAMINE DEACETYLASE 1, MITOCHONDRIAL-RELATED"/>
    <property type="match status" value="1"/>
</dbReference>
<dbReference type="PANTHER" id="PTHR33694:SF1">
    <property type="entry name" value="UDP-3-O-ACYL-N-ACETYLGLUCOSAMINE DEACETYLASE 1, MITOCHONDRIAL-RELATED"/>
    <property type="match status" value="1"/>
</dbReference>
<dbReference type="Pfam" id="PF03331">
    <property type="entry name" value="LpxC"/>
    <property type="match status" value="1"/>
</dbReference>
<dbReference type="SUPFAM" id="SSF54211">
    <property type="entry name" value="Ribosomal protein S5 domain 2-like"/>
    <property type="match status" value="2"/>
</dbReference>
<accession>Q5E2Q6</accession>
<protein>
    <recommendedName>
        <fullName evidence="1">UDP-3-O-acyl-N-acetylglucosamine deacetylase</fullName>
        <shortName evidence="1">UDP-3-O-acyl-GlcNAc deacetylase</shortName>
        <ecNumber evidence="1">3.5.1.108</ecNumber>
    </recommendedName>
    <alternativeName>
        <fullName evidence="1">UDP-3-O-[R-3-hydroxymyristoyl]-N-acetylglucosamine deacetylase</fullName>
    </alternativeName>
</protein>
<sequence length="305" mass="34101">MIRQRTLKSIVQMTGVGLHSGRKVTLTLRPAAANTGVIYRRTDLNPPVDFPADPESVRDTMLCTALVNDEGVRISTVEHLNAALAGMGIDNVVIEVDAPEIPIMDGSASPFVYLLQSAGIEELNTAKKFIRIKKPVRIEDGDKWAEIRPYNGFRLDFTIDFNHPAIESDDQKLVFDFSSQSFIKDISRARTFGFMRDIEYLQSQNLCLGGSFDCAIVLDDYRILNEDGLRFDNEFVTHKVLDAVGDLYMSGHSILGELRAYKSGHALNNQLLRAVLADQEAWEWTTIEDEQESPVAFMQPGMVLA</sequence>
<organism>
    <name type="scientific">Aliivibrio fischeri (strain ATCC 700601 / ES114)</name>
    <name type="common">Vibrio fischeri</name>
    <dbReference type="NCBI Taxonomy" id="312309"/>
    <lineage>
        <taxon>Bacteria</taxon>
        <taxon>Pseudomonadati</taxon>
        <taxon>Pseudomonadota</taxon>
        <taxon>Gammaproteobacteria</taxon>
        <taxon>Vibrionales</taxon>
        <taxon>Vibrionaceae</taxon>
        <taxon>Aliivibrio</taxon>
    </lineage>
</organism>
<reference key="1">
    <citation type="journal article" date="2005" name="Proc. Natl. Acad. Sci. U.S.A.">
        <title>Complete genome sequence of Vibrio fischeri: a symbiotic bacterium with pathogenic congeners.</title>
        <authorList>
            <person name="Ruby E.G."/>
            <person name="Urbanowski M."/>
            <person name="Campbell J."/>
            <person name="Dunn A."/>
            <person name="Faini M."/>
            <person name="Gunsalus R."/>
            <person name="Lostroh P."/>
            <person name="Lupp C."/>
            <person name="McCann J."/>
            <person name="Millikan D."/>
            <person name="Schaefer A."/>
            <person name="Stabb E."/>
            <person name="Stevens A."/>
            <person name="Visick K."/>
            <person name="Whistler C."/>
            <person name="Greenberg E.P."/>
        </authorList>
    </citation>
    <scope>NUCLEOTIDE SEQUENCE [LARGE SCALE GENOMIC DNA]</scope>
    <source>
        <strain>ATCC 700601 / ES114</strain>
    </source>
</reference>
<name>LPXC_ALIF1</name>
<evidence type="ECO:0000255" key="1">
    <source>
        <dbReference type="HAMAP-Rule" id="MF_00388"/>
    </source>
</evidence>
<proteinExistence type="inferred from homology"/>